<name>IBPA_CITK8</name>
<feature type="chain" id="PRO_1000022020" description="Small heat shock protein IbpA">
    <location>
        <begin position="1"/>
        <end position="137"/>
    </location>
</feature>
<feature type="domain" description="sHSP" evidence="2">
    <location>
        <begin position="28"/>
        <end position="137"/>
    </location>
</feature>
<protein>
    <recommendedName>
        <fullName evidence="1">Small heat shock protein IbpA</fullName>
    </recommendedName>
    <alternativeName>
        <fullName evidence="1">16 kDa heat shock protein A</fullName>
    </alternativeName>
</protein>
<gene>
    <name evidence="1" type="primary">ibpA</name>
    <name type="ordered locus">CKO_00034</name>
</gene>
<organism>
    <name type="scientific">Citrobacter koseri (strain ATCC BAA-895 / CDC 4225-83 / SGSC4696)</name>
    <dbReference type="NCBI Taxonomy" id="290338"/>
    <lineage>
        <taxon>Bacteria</taxon>
        <taxon>Pseudomonadati</taxon>
        <taxon>Pseudomonadota</taxon>
        <taxon>Gammaproteobacteria</taxon>
        <taxon>Enterobacterales</taxon>
        <taxon>Enterobacteriaceae</taxon>
        <taxon>Citrobacter</taxon>
    </lineage>
</organism>
<dbReference type="EMBL" id="CP000822">
    <property type="protein sequence ID" value="ABV11213.1"/>
    <property type="molecule type" value="Genomic_DNA"/>
</dbReference>
<dbReference type="RefSeq" id="WP_006687722.1">
    <property type="nucleotide sequence ID" value="NC_009792.1"/>
</dbReference>
<dbReference type="SMR" id="A8ACK0"/>
<dbReference type="STRING" id="290338.CKO_00034"/>
<dbReference type="GeneID" id="93035321"/>
<dbReference type="KEGG" id="cko:CKO_00034"/>
<dbReference type="HOGENOM" id="CLU_046737_4_2_6"/>
<dbReference type="OrthoDB" id="6871152at2"/>
<dbReference type="Proteomes" id="UP000008148">
    <property type="component" value="Chromosome"/>
</dbReference>
<dbReference type="GO" id="GO:0005737">
    <property type="term" value="C:cytoplasm"/>
    <property type="evidence" value="ECO:0007669"/>
    <property type="project" value="UniProtKB-SubCell"/>
</dbReference>
<dbReference type="GO" id="GO:0050821">
    <property type="term" value="P:protein stabilization"/>
    <property type="evidence" value="ECO:0007669"/>
    <property type="project" value="UniProtKB-UniRule"/>
</dbReference>
<dbReference type="CDD" id="cd06470">
    <property type="entry name" value="ACD_IbpA-B_like"/>
    <property type="match status" value="1"/>
</dbReference>
<dbReference type="FunFam" id="2.60.40.790:FF:000002">
    <property type="entry name" value="Small heat shock protein IbpA"/>
    <property type="match status" value="1"/>
</dbReference>
<dbReference type="Gene3D" id="2.60.40.790">
    <property type="match status" value="1"/>
</dbReference>
<dbReference type="HAMAP" id="MF_02000">
    <property type="entry name" value="HSP20_IbpA"/>
    <property type="match status" value="1"/>
</dbReference>
<dbReference type="InterPro" id="IPR002068">
    <property type="entry name" value="A-crystallin/Hsp20_dom"/>
</dbReference>
<dbReference type="InterPro" id="IPR037913">
    <property type="entry name" value="ACD_IbpA/B"/>
</dbReference>
<dbReference type="InterPro" id="IPR008978">
    <property type="entry name" value="HSP20-like_chaperone"/>
</dbReference>
<dbReference type="InterPro" id="IPR023728">
    <property type="entry name" value="HSP20_IbpA"/>
</dbReference>
<dbReference type="NCBIfam" id="NF008013">
    <property type="entry name" value="PRK10743.1"/>
    <property type="match status" value="1"/>
</dbReference>
<dbReference type="PANTHER" id="PTHR47062">
    <property type="match status" value="1"/>
</dbReference>
<dbReference type="PANTHER" id="PTHR47062:SF1">
    <property type="entry name" value="SMALL HEAT SHOCK PROTEIN IBPA"/>
    <property type="match status" value="1"/>
</dbReference>
<dbReference type="Pfam" id="PF00011">
    <property type="entry name" value="HSP20"/>
    <property type="match status" value="1"/>
</dbReference>
<dbReference type="SUPFAM" id="SSF49764">
    <property type="entry name" value="HSP20-like chaperones"/>
    <property type="match status" value="1"/>
</dbReference>
<dbReference type="PROSITE" id="PS01031">
    <property type="entry name" value="SHSP"/>
    <property type="match status" value="1"/>
</dbReference>
<accession>A8ACK0</accession>
<reference key="1">
    <citation type="submission" date="2007-08" db="EMBL/GenBank/DDBJ databases">
        <authorList>
            <consortium name="The Citrobacter koseri Genome Sequencing Project"/>
            <person name="McClelland M."/>
            <person name="Sanderson E.K."/>
            <person name="Porwollik S."/>
            <person name="Spieth J."/>
            <person name="Clifton W.S."/>
            <person name="Latreille P."/>
            <person name="Courtney L."/>
            <person name="Wang C."/>
            <person name="Pepin K."/>
            <person name="Bhonagiri V."/>
            <person name="Nash W."/>
            <person name="Johnson M."/>
            <person name="Thiruvilangam P."/>
            <person name="Wilson R."/>
        </authorList>
    </citation>
    <scope>NUCLEOTIDE SEQUENCE [LARGE SCALE GENOMIC DNA]</scope>
    <source>
        <strain>ATCC BAA-895 / CDC 4225-83 / SGSC4696</strain>
    </source>
</reference>
<comment type="function">
    <text evidence="1">Associates with aggregated proteins, together with IbpB, to stabilize and protect them from irreversible denaturation and extensive proteolysis during heat shock and oxidative stress. Aggregated proteins bound to the IbpAB complex are more efficiently refolded and reactivated by the ATP-dependent chaperone systems ClpB and DnaK/DnaJ/GrpE. Its activity is ATP-independent.</text>
</comment>
<comment type="subunit">
    <text evidence="1">Monomer. Forms homomultimers of about 100-150 subunits at optimal growth temperatures. Conformation changes to monomers at high temperatures or high ionic concentrations.</text>
</comment>
<comment type="subcellular location">
    <subcellularLocation>
        <location evidence="1">Cytoplasm</location>
    </subcellularLocation>
</comment>
<comment type="similarity">
    <text evidence="1 2">Belongs to the small heat shock protein (HSP20) family.</text>
</comment>
<sequence length="137" mass="15736">MRNFDLSPLYRSAIGFDRLFNLLENNQSQSNGGYPPYNVELVDENHYRIAIAVAGFAESELEITAQDNLLVVKGAHADEQKERTYLYQGIAERNFERKFQLAENIHVRGANLVNGLLYIDLERVIPEANKPRRIEIN</sequence>
<proteinExistence type="inferred from homology"/>
<keyword id="KW-0143">Chaperone</keyword>
<keyword id="KW-0963">Cytoplasm</keyword>
<keyword id="KW-1185">Reference proteome</keyword>
<keyword id="KW-0346">Stress response</keyword>
<evidence type="ECO:0000255" key="1">
    <source>
        <dbReference type="HAMAP-Rule" id="MF_02000"/>
    </source>
</evidence>
<evidence type="ECO:0000255" key="2">
    <source>
        <dbReference type="PROSITE-ProRule" id="PRU00285"/>
    </source>
</evidence>